<comment type="function">
    <text evidence="1">Catalyzes the attachment of proline to tRNA(Pro) in a two-step reaction: proline is first activated by ATP to form Pro-AMP and then transferred to the acceptor end of tRNA(Pro). As ProRS can inadvertently accommodate and process non-cognate amino acids such as alanine and cysteine, to avoid such errors it has two additional distinct editing activities against alanine. One activity is designated as 'pretransfer' editing and involves the tRNA(Pro)-independent hydrolysis of activated Ala-AMP. The other activity is designated 'posttransfer' editing and involves deacylation of mischarged Ala-tRNA(Pro). The misacylated Cys-tRNA(Pro) is not edited by ProRS.</text>
</comment>
<comment type="catalytic activity">
    <reaction evidence="1">
        <text>tRNA(Pro) + L-proline + ATP = L-prolyl-tRNA(Pro) + AMP + diphosphate</text>
        <dbReference type="Rhea" id="RHEA:14305"/>
        <dbReference type="Rhea" id="RHEA-COMP:9700"/>
        <dbReference type="Rhea" id="RHEA-COMP:9702"/>
        <dbReference type="ChEBI" id="CHEBI:30616"/>
        <dbReference type="ChEBI" id="CHEBI:33019"/>
        <dbReference type="ChEBI" id="CHEBI:60039"/>
        <dbReference type="ChEBI" id="CHEBI:78442"/>
        <dbReference type="ChEBI" id="CHEBI:78532"/>
        <dbReference type="ChEBI" id="CHEBI:456215"/>
        <dbReference type="EC" id="6.1.1.15"/>
    </reaction>
</comment>
<comment type="subunit">
    <text evidence="1">Homodimer.</text>
</comment>
<comment type="subcellular location">
    <subcellularLocation>
        <location evidence="1">Cytoplasm</location>
    </subcellularLocation>
</comment>
<comment type="domain">
    <text evidence="1">Consists of three domains: the N-terminal catalytic domain, the editing domain and the C-terminal anticodon-binding domain.</text>
</comment>
<comment type="similarity">
    <text evidence="1">Belongs to the class-II aminoacyl-tRNA synthetase family. ProS type 1 subfamily.</text>
</comment>
<dbReference type="EC" id="6.1.1.15" evidence="1"/>
<dbReference type="EMBL" id="AE009442">
    <property type="protein sequence ID" value="AAO29475.1"/>
    <property type="molecule type" value="Genomic_DNA"/>
</dbReference>
<dbReference type="RefSeq" id="WP_011098191.1">
    <property type="nucleotide sequence ID" value="NC_004556.1"/>
</dbReference>
<dbReference type="SMR" id="Q87B25"/>
<dbReference type="KEGG" id="xft:PD_1635"/>
<dbReference type="HOGENOM" id="CLU_016739_0_0_6"/>
<dbReference type="Proteomes" id="UP000002516">
    <property type="component" value="Chromosome"/>
</dbReference>
<dbReference type="GO" id="GO:0005829">
    <property type="term" value="C:cytosol"/>
    <property type="evidence" value="ECO:0007669"/>
    <property type="project" value="TreeGrafter"/>
</dbReference>
<dbReference type="GO" id="GO:0002161">
    <property type="term" value="F:aminoacyl-tRNA deacylase activity"/>
    <property type="evidence" value="ECO:0007669"/>
    <property type="project" value="InterPro"/>
</dbReference>
<dbReference type="GO" id="GO:0005524">
    <property type="term" value="F:ATP binding"/>
    <property type="evidence" value="ECO:0007669"/>
    <property type="project" value="UniProtKB-UniRule"/>
</dbReference>
<dbReference type="GO" id="GO:0004827">
    <property type="term" value="F:proline-tRNA ligase activity"/>
    <property type="evidence" value="ECO:0007669"/>
    <property type="project" value="UniProtKB-UniRule"/>
</dbReference>
<dbReference type="GO" id="GO:0006433">
    <property type="term" value="P:prolyl-tRNA aminoacylation"/>
    <property type="evidence" value="ECO:0007669"/>
    <property type="project" value="UniProtKB-UniRule"/>
</dbReference>
<dbReference type="CDD" id="cd04334">
    <property type="entry name" value="ProRS-INS"/>
    <property type="match status" value="1"/>
</dbReference>
<dbReference type="CDD" id="cd00861">
    <property type="entry name" value="ProRS_anticodon_short"/>
    <property type="match status" value="1"/>
</dbReference>
<dbReference type="CDD" id="cd00779">
    <property type="entry name" value="ProRS_core_prok"/>
    <property type="match status" value="1"/>
</dbReference>
<dbReference type="FunFam" id="3.30.930.10:FF:000012">
    <property type="entry name" value="Proline--tRNA ligase"/>
    <property type="match status" value="1"/>
</dbReference>
<dbReference type="Gene3D" id="3.40.50.800">
    <property type="entry name" value="Anticodon-binding domain"/>
    <property type="match status" value="1"/>
</dbReference>
<dbReference type="Gene3D" id="3.30.930.10">
    <property type="entry name" value="Bira Bifunctional Protein, Domain 2"/>
    <property type="match status" value="2"/>
</dbReference>
<dbReference type="Gene3D" id="3.90.960.10">
    <property type="entry name" value="YbaK/aminoacyl-tRNA synthetase-associated domain"/>
    <property type="match status" value="1"/>
</dbReference>
<dbReference type="HAMAP" id="MF_01569">
    <property type="entry name" value="Pro_tRNA_synth_type1"/>
    <property type="match status" value="1"/>
</dbReference>
<dbReference type="InterPro" id="IPR002314">
    <property type="entry name" value="aa-tRNA-synt_IIb"/>
</dbReference>
<dbReference type="InterPro" id="IPR006195">
    <property type="entry name" value="aa-tRNA-synth_II"/>
</dbReference>
<dbReference type="InterPro" id="IPR045864">
    <property type="entry name" value="aa-tRNA-synth_II/BPL/LPL"/>
</dbReference>
<dbReference type="InterPro" id="IPR004154">
    <property type="entry name" value="Anticodon-bd"/>
</dbReference>
<dbReference type="InterPro" id="IPR036621">
    <property type="entry name" value="Anticodon-bd_dom_sf"/>
</dbReference>
<dbReference type="InterPro" id="IPR002316">
    <property type="entry name" value="Pro-tRNA-ligase_IIa"/>
</dbReference>
<dbReference type="InterPro" id="IPR004500">
    <property type="entry name" value="Pro-tRNA-synth_IIa_bac-type"/>
</dbReference>
<dbReference type="InterPro" id="IPR023717">
    <property type="entry name" value="Pro-tRNA-Synthase_IIa_type1"/>
</dbReference>
<dbReference type="InterPro" id="IPR050062">
    <property type="entry name" value="Pro-tRNA_synthetase"/>
</dbReference>
<dbReference type="InterPro" id="IPR044140">
    <property type="entry name" value="ProRS_anticodon_short"/>
</dbReference>
<dbReference type="InterPro" id="IPR033730">
    <property type="entry name" value="ProRS_core_prok"/>
</dbReference>
<dbReference type="InterPro" id="IPR036754">
    <property type="entry name" value="YbaK/aa-tRNA-synt-asso_dom_sf"/>
</dbReference>
<dbReference type="InterPro" id="IPR007214">
    <property type="entry name" value="YbaK/aa-tRNA-synth-assoc-dom"/>
</dbReference>
<dbReference type="NCBIfam" id="NF006625">
    <property type="entry name" value="PRK09194.1"/>
    <property type="match status" value="1"/>
</dbReference>
<dbReference type="NCBIfam" id="TIGR00409">
    <property type="entry name" value="proS_fam_II"/>
    <property type="match status" value="1"/>
</dbReference>
<dbReference type="PANTHER" id="PTHR42753">
    <property type="entry name" value="MITOCHONDRIAL RIBOSOME PROTEIN L39/PROLYL-TRNA LIGASE FAMILY MEMBER"/>
    <property type="match status" value="1"/>
</dbReference>
<dbReference type="PANTHER" id="PTHR42753:SF2">
    <property type="entry name" value="PROLINE--TRNA LIGASE"/>
    <property type="match status" value="1"/>
</dbReference>
<dbReference type="Pfam" id="PF03129">
    <property type="entry name" value="HGTP_anticodon"/>
    <property type="match status" value="1"/>
</dbReference>
<dbReference type="Pfam" id="PF00587">
    <property type="entry name" value="tRNA-synt_2b"/>
    <property type="match status" value="1"/>
</dbReference>
<dbReference type="Pfam" id="PF04073">
    <property type="entry name" value="tRNA_edit"/>
    <property type="match status" value="1"/>
</dbReference>
<dbReference type="PRINTS" id="PR01046">
    <property type="entry name" value="TRNASYNTHPRO"/>
</dbReference>
<dbReference type="SUPFAM" id="SSF52954">
    <property type="entry name" value="Class II aaRS ABD-related"/>
    <property type="match status" value="1"/>
</dbReference>
<dbReference type="SUPFAM" id="SSF55681">
    <property type="entry name" value="Class II aaRS and biotin synthetases"/>
    <property type="match status" value="1"/>
</dbReference>
<dbReference type="SUPFAM" id="SSF55826">
    <property type="entry name" value="YbaK/ProRS associated domain"/>
    <property type="match status" value="1"/>
</dbReference>
<dbReference type="PROSITE" id="PS50862">
    <property type="entry name" value="AA_TRNA_LIGASE_II"/>
    <property type="match status" value="1"/>
</dbReference>
<accession>Q87B25</accession>
<keyword id="KW-0030">Aminoacyl-tRNA synthetase</keyword>
<keyword id="KW-0067">ATP-binding</keyword>
<keyword id="KW-0963">Cytoplasm</keyword>
<keyword id="KW-0436">Ligase</keyword>
<keyword id="KW-0547">Nucleotide-binding</keyword>
<keyword id="KW-0648">Protein biosynthesis</keyword>
<keyword id="KW-1185">Reference proteome</keyword>
<organism>
    <name type="scientific">Xylella fastidiosa (strain Temecula1 / ATCC 700964)</name>
    <dbReference type="NCBI Taxonomy" id="183190"/>
    <lineage>
        <taxon>Bacteria</taxon>
        <taxon>Pseudomonadati</taxon>
        <taxon>Pseudomonadota</taxon>
        <taxon>Gammaproteobacteria</taxon>
        <taxon>Lysobacterales</taxon>
        <taxon>Lysobacteraceae</taxon>
        <taxon>Xylella</taxon>
    </lineage>
</organism>
<evidence type="ECO:0000255" key="1">
    <source>
        <dbReference type="HAMAP-Rule" id="MF_01569"/>
    </source>
</evidence>
<proteinExistence type="inferred from homology"/>
<sequence>MRLSEFHLHTTKEIPADAELVSHRLMLRAGMIRKLASGLYTWSPLGLRVLRKVEAIVRDEMNRAGAVEMLLPTIQPRELWEESERWEKFGSQLLKIKDRKQAEYCYSPTAEEAVTDYVRQELTSYKQLPVNLYQIQTKFRDEIRPRFGVMRAREFVMKDAYSFHLNDADLVREYENMRATYTRIFTRLGLEFRAVQADSGAIGGDASQEFHVIADSGEDVLAFSTGSDYAANIEAAIAATPGPRLTANETLQKVSTPTQKRCEDVAALLDIPLQRVVKSIAVMTDSGFFLALLRGDHTLNDIKLSKLPGLANFRLANEVEIARHLGSEPGFLGPVCPGMPIRIIADCEVAVMADFVVGANEVGFHLVGVNWGRDLPEPEVVADIRNVIEGDRAVDGGKICIARGIEVGHVFQLGRKYAEAMKATVLDEYGKAVTMTMGCYGIGVSRIVAAAIEQNHDVAGIIWPAPIAPWQVAVCVINPKKDPVITAAAEMLLAELQSADVDTVLDDRGLRPGVMFADMELIGIPHRIVVSERGLAAGTYEYRARRTAMVENLDKTTLLTRIKA</sequence>
<gene>
    <name evidence="1" type="primary">proS</name>
    <name type="ordered locus">PD_1635</name>
</gene>
<name>SYP_XYLFT</name>
<reference key="1">
    <citation type="journal article" date="2003" name="J. Bacteriol.">
        <title>Comparative analyses of the complete genome sequences of Pierce's disease and citrus variegated chlorosis strains of Xylella fastidiosa.</title>
        <authorList>
            <person name="Van Sluys M.A."/>
            <person name="de Oliveira M.C."/>
            <person name="Monteiro-Vitorello C.B."/>
            <person name="Miyaki C.Y."/>
            <person name="Furlan L.R."/>
            <person name="Camargo L.E.A."/>
            <person name="da Silva A.C.R."/>
            <person name="Moon D.H."/>
            <person name="Takita M.A."/>
            <person name="Lemos E.G.M."/>
            <person name="Machado M.A."/>
            <person name="Ferro M.I.T."/>
            <person name="da Silva F.R."/>
            <person name="Goldman M.H.S."/>
            <person name="Goldman G.H."/>
            <person name="Lemos M.V.F."/>
            <person name="El-Dorry H."/>
            <person name="Tsai S.M."/>
            <person name="Carrer H."/>
            <person name="Carraro D.M."/>
            <person name="de Oliveira R.C."/>
            <person name="Nunes L.R."/>
            <person name="Siqueira W.J."/>
            <person name="Coutinho L.L."/>
            <person name="Kimura E.T."/>
            <person name="Ferro E.S."/>
            <person name="Harakava R."/>
            <person name="Kuramae E.E."/>
            <person name="Marino C.L."/>
            <person name="Giglioti E."/>
            <person name="Abreu I.L."/>
            <person name="Alves L.M.C."/>
            <person name="do Amaral A.M."/>
            <person name="Baia G.S."/>
            <person name="Blanco S.R."/>
            <person name="Brito M.S."/>
            <person name="Cannavan F.S."/>
            <person name="Celestino A.V."/>
            <person name="da Cunha A.F."/>
            <person name="Fenille R.C."/>
            <person name="Ferro J.A."/>
            <person name="Formighieri E.F."/>
            <person name="Kishi L.T."/>
            <person name="Leoni S.G."/>
            <person name="Oliveira A.R."/>
            <person name="Rosa V.E. Jr."/>
            <person name="Sassaki F.T."/>
            <person name="Sena J.A.D."/>
            <person name="de Souza A.A."/>
            <person name="Truffi D."/>
            <person name="Tsukumo F."/>
            <person name="Yanai G.M."/>
            <person name="Zaros L.G."/>
            <person name="Civerolo E.L."/>
            <person name="Simpson A.J.G."/>
            <person name="Almeida N.F. Jr."/>
            <person name="Setubal J.C."/>
            <person name="Kitajima J.P."/>
        </authorList>
    </citation>
    <scope>NUCLEOTIDE SEQUENCE [LARGE SCALE GENOMIC DNA]</scope>
    <source>
        <strain>Temecula1 / ATCC 700964</strain>
    </source>
</reference>
<protein>
    <recommendedName>
        <fullName evidence="1">Proline--tRNA ligase</fullName>
        <ecNumber evidence="1">6.1.1.15</ecNumber>
    </recommendedName>
    <alternativeName>
        <fullName evidence="1">Prolyl-tRNA synthetase</fullName>
        <shortName evidence="1">ProRS</shortName>
    </alternativeName>
</protein>
<feature type="chain" id="PRO_0000248822" description="Proline--tRNA ligase">
    <location>
        <begin position="1"/>
        <end position="564"/>
    </location>
</feature>